<name>OBG_RALPJ</name>
<reference key="1">
    <citation type="submission" date="2008-05" db="EMBL/GenBank/DDBJ databases">
        <title>Complete sequence of chromosome 1 of Ralstonia pickettii 12J.</title>
        <authorList>
            <person name="Lucas S."/>
            <person name="Copeland A."/>
            <person name="Lapidus A."/>
            <person name="Glavina del Rio T."/>
            <person name="Dalin E."/>
            <person name="Tice H."/>
            <person name="Bruce D."/>
            <person name="Goodwin L."/>
            <person name="Pitluck S."/>
            <person name="Meincke L."/>
            <person name="Brettin T."/>
            <person name="Detter J.C."/>
            <person name="Han C."/>
            <person name="Kuske C.R."/>
            <person name="Schmutz J."/>
            <person name="Larimer F."/>
            <person name="Land M."/>
            <person name="Hauser L."/>
            <person name="Kyrpides N."/>
            <person name="Mikhailova N."/>
            <person name="Marsh T."/>
            <person name="Richardson P."/>
        </authorList>
    </citation>
    <scope>NUCLEOTIDE SEQUENCE [LARGE SCALE GENOMIC DNA]</scope>
    <source>
        <strain>12J</strain>
    </source>
</reference>
<organism>
    <name type="scientific">Ralstonia pickettii (strain 12J)</name>
    <dbReference type="NCBI Taxonomy" id="402626"/>
    <lineage>
        <taxon>Bacteria</taxon>
        <taxon>Pseudomonadati</taxon>
        <taxon>Pseudomonadota</taxon>
        <taxon>Betaproteobacteria</taxon>
        <taxon>Burkholderiales</taxon>
        <taxon>Burkholderiaceae</taxon>
        <taxon>Ralstonia</taxon>
    </lineage>
</organism>
<comment type="function">
    <text evidence="1">An essential GTPase which binds GTP, GDP and possibly (p)ppGpp with moderate affinity, with high nucleotide exchange rates and a fairly low GTP hydrolysis rate. Plays a role in control of the cell cycle, stress response, ribosome biogenesis and in those bacteria that undergo differentiation, in morphogenesis control.</text>
</comment>
<comment type="cofactor">
    <cofactor evidence="1">
        <name>Mg(2+)</name>
        <dbReference type="ChEBI" id="CHEBI:18420"/>
    </cofactor>
</comment>
<comment type="subunit">
    <text evidence="1">Monomer.</text>
</comment>
<comment type="subcellular location">
    <subcellularLocation>
        <location evidence="1">Cytoplasm</location>
    </subcellularLocation>
</comment>
<comment type="similarity">
    <text evidence="1">Belongs to the TRAFAC class OBG-HflX-like GTPase superfamily. OBG GTPase family.</text>
</comment>
<sequence length="364" mass="39564">MKFIDEARIEVIAGDGGNGSASMRREKFVPFGGPDGGDGGRGGSVWAVADRNINTLIDYRFAKKHLARNGENGRGADCYGAAGDDITLRMPVGTAIYDADTEELIADLTIDGQRLCLAQGGEGGWGNIHFKSSTNRAPRQKTDGKAGERRNLRLELKVLADVGLLGMPNAGKSTLITAISNARPKIADYPFTTLHPNLGVVRTGPSKSFVVADIPGLIEGAAEGAGLGHQFLRHLQRTRVLLHVVDLAPFDESVDPVAEAKAIVGELKKYDAELFDKPRWLVLNKLDMVPEDEREARVKDFVKRFKWKGPVHRISALTHDGTQALVHAIQEYLDELRAEEDAAAAAPDQRLDPTLHNVDHDDQA</sequence>
<dbReference type="EC" id="3.6.5.-" evidence="1"/>
<dbReference type="EMBL" id="CP001068">
    <property type="protein sequence ID" value="ACD28188.1"/>
    <property type="molecule type" value="Genomic_DNA"/>
</dbReference>
<dbReference type="SMR" id="B2UCV3"/>
<dbReference type="STRING" id="402626.Rpic_3065"/>
<dbReference type="KEGG" id="rpi:Rpic_3065"/>
<dbReference type="PATRIC" id="fig|402626.5.peg.4202"/>
<dbReference type="eggNOG" id="COG0536">
    <property type="taxonomic scope" value="Bacteria"/>
</dbReference>
<dbReference type="HOGENOM" id="CLU_011747_2_0_4"/>
<dbReference type="GO" id="GO:0005737">
    <property type="term" value="C:cytoplasm"/>
    <property type="evidence" value="ECO:0007669"/>
    <property type="project" value="UniProtKB-SubCell"/>
</dbReference>
<dbReference type="GO" id="GO:0005525">
    <property type="term" value="F:GTP binding"/>
    <property type="evidence" value="ECO:0007669"/>
    <property type="project" value="UniProtKB-UniRule"/>
</dbReference>
<dbReference type="GO" id="GO:0003924">
    <property type="term" value="F:GTPase activity"/>
    <property type="evidence" value="ECO:0007669"/>
    <property type="project" value="UniProtKB-UniRule"/>
</dbReference>
<dbReference type="GO" id="GO:0000287">
    <property type="term" value="F:magnesium ion binding"/>
    <property type="evidence" value="ECO:0007669"/>
    <property type="project" value="InterPro"/>
</dbReference>
<dbReference type="GO" id="GO:0042254">
    <property type="term" value="P:ribosome biogenesis"/>
    <property type="evidence" value="ECO:0007669"/>
    <property type="project" value="UniProtKB-UniRule"/>
</dbReference>
<dbReference type="CDD" id="cd01898">
    <property type="entry name" value="Obg"/>
    <property type="match status" value="1"/>
</dbReference>
<dbReference type="FunFam" id="2.70.210.12:FF:000001">
    <property type="entry name" value="GTPase Obg"/>
    <property type="match status" value="1"/>
</dbReference>
<dbReference type="Gene3D" id="2.70.210.12">
    <property type="entry name" value="GTP1/OBG domain"/>
    <property type="match status" value="1"/>
</dbReference>
<dbReference type="Gene3D" id="3.40.50.300">
    <property type="entry name" value="P-loop containing nucleotide triphosphate hydrolases"/>
    <property type="match status" value="1"/>
</dbReference>
<dbReference type="HAMAP" id="MF_01454">
    <property type="entry name" value="GTPase_Obg"/>
    <property type="match status" value="1"/>
</dbReference>
<dbReference type="InterPro" id="IPR031167">
    <property type="entry name" value="G_OBG"/>
</dbReference>
<dbReference type="InterPro" id="IPR006073">
    <property type="entry name" value="GTP-bd"/>
</dbReference>
<dbReference type="InterPro" id="IPR014100">
    <property type="entry name" value="GTP-bd_Obg/CgtA"/>
</dbReference>
<dbReference type="InterPro" id="IPR006074">
    <property type="entry name" value="GTP1-OBG_CS"/>
</dbReference>
<dbReference type="InterPro" id="IPR006169">
    <property type="entry name" value="GTP1_OBG_dom"/>
</dbReference>
<dbReference type="InterPro" id="IPR036726">
    <property type="entry name" value="GTP1_OBG_dom_sf"/>
</dbReference>
<dbReference type="InterPro" id="IPR045086">
    <property type="entry name" value="OBG_GTPase"/>
</dbReference>
<dbReference type="InterPro" id="IPR027417">
    <property type="entry name" value="P-loop_NTPase"/>
</dbReference>
<dbReference type="NCBIfam" id="TIGR02729">
    <property type="entry name" value="Obg_CgtA"/>
    <property type="match status" value="1"/>
</dbReference>
<dbReference type="NCBIfam" id="NF008954">
    <property type="entry name" value="PRK12296.1"/>
    <property type="match status" value="1"/>
</dbReference>
<dbReference type="NCBIfam" id="NF008955">
    <property type="entry name" value="PRK12297.1"/>
    <property type="match status" value="1"/>
</dbReference>
<dbReference type="NCBIfam" id="NF008956">
    <property type="entry name" value="PRK12299.1"/>
    <property type="match status" value="1"/>
</dbReference>
<dbReference type="PANTHER" id="PTHR11702">
    <property type="entry name" value="DEVELOPMENTALLY REGULATED GTP-BINDING PROTEIN-RELATED"/>
    <property type="match status" value="1"/>
</dbReference>
<dbReference type="PANTHER" id="PTHR11702:SF31">
    <property type="entry name" value="MITOCHONDRIAL RIBOSOME-ASSOCIATED GTPASE 2"/>
    <property type="match status" value="1"/>
</dbReference>
<dbReference type="Pfam" id="PF01018">
    <property type="entry name" value="GTP1_OBG"/>
    <property type="match status" value="1"/>
</dbReference>
<dbReference type="Pfam" id="PF01926">
    <property type="entry name" value="MMR_HSR1"/>
    <property type="match status" value="1"/>
</dbReference>
<dbReference type="PIRSF" id="PIRSF002401">
    <property type="entry name" value="GTP_bd_Obg/CgtA"/>
    <property type="match status" value="1"/>
</dbReference>
<dbReference type="PRINTS" id="PR00326">
    <property type="entry name" value="GTP1OBG"/>
</dbReference>
<dbReference type="SUPFAM" id="SSF82051">
    <property type="entry name" value="Obg GTP-binding protein N-terminal domain"/>
    <property type="match status" value="1"/>
</dbReference>
<dbReference type="SUPFAM" id="SSF52540">
    <property type="entry name" value="P-loop containing nucleoside triphosphate hydrolases"/>
    <property type="match status" value="1"/>
</dbReference>
<dbReference type="PROSITE" id="PS51710">
    <property type="entry name" value="G_OBG"/>
    <property type="match status" value="1"/>
</dbReference>
<dbReference type="PROSITE" id="PS00905">
    <property type="entry name" value="GTP1_OBG"/>
    <property type="match status" value="1"/>
</dbReference>
<dbReference type="PROSITE" id="PS51883">
    <property type="entry name" value="OBG"/>
    <property type="match status" value="1"/>
</dbReference>
<keyword id="KW-0963">Cytoplasm</keyword>
<keyword id="KW-0342">GTP-binding</keyword>
<keyword id="KW-0378">Hydrolase</keyword>
<keyword id="KW-0460">Magnesium</keyword>
<keyword id="KW-0479">Metal-binding</keyword>
<keyword id="KW-0547">Nucleotide-binding</keyword>
<evidence type="ECO:0000255" key="1">
    <source>
        <dbReference type="HAMAP-Rule" id="MF_01454"/>
    </source>
</evidence>
<evidence type="ECO:0000255" key="2">
    <source>
        <dbReference type="PROSITE-ProRule" id="PRU01231"/>
    </source>
</evidence>
<evidence type="ECO:0000256" key="3">
    <source>
        <dbReference type="SAM" id="MobiDB-lite"/>
    </source>
</evidence>
<accession>B2UCV3</accession>
<feature type="chain" id="PRO_0000386172" description="GTPase Obg">
    <location>
        <begin position="1"/>
        <end position="364"/>
    </location>
</feature>
<feature type="domain" description="Obg" evidence="2">
    <location>
        <begin position="1"/>
        <end position="159"/>
    </location>
</feature>
<feature type="domain" description="OBG-type G" evidence="1">
    <location>
        <begin position="160"/>
        <end position="334"/>
    </location>
</feature>
<feature type="region of interest" description="Disordered" evidence="3">
    <location>
        <begin position="128"/>
        <end position="147"/>
    </location>
</feature>
<feature type="region of interest" description="Disordered" evidence="3">
    <location>
        <begin position="340"/>
        <end position="364"/>
    </location>
</feature>
<feature type="compositionally biased region" description="Basic and acidic residues" evidence="3">
    <location>
        <begin position="349"/>
        <end position="364"/>
    </location>
</feature>
<feature type="binding site" evidence="1">
    <location>
        <begin position="166"/>
        <end position="173"/>
    </location>
    <ligand>
        <name>GTP</name>
        <dbReference type="ChEBI" id="CHEBI:37565"/>
    </ligand>
</feature>
<feature type="binding site" evidence="1">
    <location>
        <position position="173"/>
    </location>
    <ligand>
        <name>Mg(2+)</name>
        <dbReference type="ChEBI" id="CHEBI:18420"/>
    </ligand>
</feature>
<feature type="binding site" evidence="1">
    <location>
        <begin position="191"/>
        <end position="195"/>
    </location>
    <ligand>
        <name>GTP</name>
        <dbReference type="ChEBI" id="CHEBI:37565"/>
    </ligand>
</feature>
<feature type="binding site" evidence="1">
    <location>
        <position position="193"/>
    </location>
    <ligand>
        <name>Mg(2+)</name>
        <dbReference type="ChEBI" id="CHEBI:18420"/>
    </ligand>
</feature>
<feature type="binding site" evidence="1">
    <location>
        <begin position="213"/>
        <end position="216"/>
    </location>
    <ligand>
        <name>GTP</name>
        <dbReference type="ChEBI" id="CHEBI:37565"/>
    </ligand>
</feature>
<feature type="binding site" evidence="1">
    <location>
        <begin position="284"/>
        <end position="287"/>
    </location>
    <ligand>
        <name>GTP</name>
        <dbReference type="ChEBI" id="CHEBI:37565"/>
    </ligand>
</feature>
<feature type="binding site" evidence="1">
    <location>
        <begin position="315"/>
        <end position="317"/>
    </location>
    <ligand>
        <name>GTP</name>
        <dbReference type="ChEBI" id="CHEBI:37565"/>
    </ligand>
</feature>
<gene>
    <name evidence="1" type="primary">obg</name>
    <name type="ordered locus">Rpic_3065</name>
</gene>
<protein>
    <recommendedName>
        <fullName evidence="1">GTPase Obg</fullName>
        <ecNumber evidence="1">3.6.5.-</ecNumber>
    </recommendedName>
    <alternativeName>
        <fullName evidence="1">GTP-binding protein Obg</fullName>
    </alternativeName>
</protein>
<proteinExistence type="inferred from homology"/>